<keyword id="KW-0963">Cytoplasm</keyword>
<keyword id="KW-0238">DNA-binding</keyword>
<keyword id="KW-0520">NAD</keyword>
<keyword id="KW-0678">Repressor</keyword>
<keyword id="KW-0804">Transcription</keyword>
<keyword id="KW-0805">Transcription regulation</keyword>
<proteinExistence type="inferred from homology"/>
<name>REX_LISMF</name>
<accession>Q71XU1</accession>
<sequence>MMEETTKIPQATAKRLPLYHRYLKYLDESGKERVSSAELSEAVKVDSATIRRDFSYFGALGKKGYGYNVSYILDFFSKTLSQDKQTNVALIGVGNLGTALLHYNFMKNNNIKIVAAFDVDPAKVGSVQQDIPIYHLNDMEEIVRENGVEVVILTVPADEAQVTVDRLIEADVKGILNFTPARISVPKQVRVHHIDLTTELQTLIYFLENYPAKTE</sequence>
<dbReference type="EMBL" id="AE017262">
    <property type="protein sequence ID" value="AAT04874.1"/>
    <property type="molecule type" value="Genomic_DNA"/>
</dbReference>
<dbReference type="RefSeq" id="WP_003722329.1">
    <property type="nucleotide sequence ID" value="NC_002973.6"/>
</dbReference>
<dbReference type="SMR" id="Q71XU1"/>
<dbReference type="KEGG" id="lmf:LMOf2365_2104"/>
<dbReference type="HOGENOM" id="CLU_061534_1_1_9"/>
<dbReference type="GO" id="GO:0005737">
    <property type="term" value="C:cytoplasm"/>
    <property type="evidence" value="ECO:0007669"/>
    <property type="project" value="UniProtKB-SubCell"/>
</dbReference>
<dbReference type="GO" id="GO:0003677">
    <property type="term" value="F:DNA binding"/>
    <property type="evidence" value="ECO:0007669"/>
    <property type="project" value="UniProtKB-UniRule"/>
</dbReference>
<dbReference type="GO" id="GO:0003700">
    <property type="term" value="F:DNA-binding transcription factor activity"/>
    <property type="evidence" value="ECO:0007669"/>
    <property type="project" value="UniProtKB-UniRule"/>
</dbReference>
<dbReference type="GO" id="GO:0045892">
    <property type="term" value="P:negative regulation of DNA-templated transcription"/>
    <property type="evidence" value="ECO:0007669"/>
    <property type="project" value="InterPro"/>
</dbReference>
<dbReference type="GO" id="GO:0051775">
    <property type="term" value="P:response to redox state"/>
    <property type="evidence" value="ECO:0007669"/>
    <property type="project" value="InterPro"/>
</dbReference>
<dbReference type="Gene3D" id="3.40.50.720">
    <property type="entry name" value="NAD(P)-binding Rossmann-like Domain"/>
    <property type="match status" value="1"/>
</dbReference>
<dbReference type="Gene3D" id="1.10.10.10">
    <property type="entry name" value="Winged helix-like DNA-binding domain superfamily/Winged helix DNA-binding domain"/>
    <property type="match status" value="1"/>
</dbReference>
<dbReference type="HAMAP" id="MF_01131">
    <property type="entry name" value="Rex"/>
    <property type="match status" value="1"/>
</dbReference>
<dbReference type="InterPro" id="IPR003781">
    <property type="entry name" value="CoA-bd"/>
</dbReference>
<dbReference type="InterPro" id="IPR036291">
    <property type="entry name" value="NAD(P)-bd_dom_sf"/>
</dbReference>
<dbReference type="InterPro" id="IPR009718">
    <property type="entry name" value="Rex_DNA-bd_C_dom"/>
</dbReference>
<dbReference type="InterPro" id="IPR022876">
    <property type="entry name" value="Tscrpt_rep_Rex"/>
</dbReference>
<dbReference type="InterPro" id="IPR036388">
    <property type="entry name" value="WH-like_DNA-bd_sf"/>
</dbReference>
<dbReference type="InterPro" id="IPR036390">
    <property type="entry name" value="WH_DNA-bd_sf"/>
</dbReference>
<dbReference type="NCBIfam" id="NF003989">
    <property type="entry name" value="PRK05472.1-3"/>
    <property type="match status" value="1"/>
</dbReference>
<dbReference type="NCBIfam" id="NF003991">
    <property type="entry name" value="PRK05472.1-5"/>
    <property type="match status" value="1"/>
</dbReference>
<dbReference type="NCBIfam" id="NF003994">
    <property type="entry name" value="PRK05472.2-3"/>
    <property type="match status" value="1"/>
</dbReference>
<dbReference type="NCBIfam" id="NF003995">
    <property type="entry name" value="PRK05472.2-4"/>
    <property type="match status" value="1"/>
</dbReference>
<dbReference type="NCBIfam" id="NF003996">
    <property type="entry name" value="PRK05472.2-5"/>
    <property type="match status" value="1"/>
</dbReference>
<dbReference type="PANTHER" id="PTHR35786">
    <property type="entry name" value="REDOX-SENSING TRANSCRIPTIONAL REPRESSOR REX"/>
    <property type="match status" value="1"/>
</dbReference>
<dbReference type="PANTHER" id="PTHR35786:SF1">
    <property type="entry name" value="REDOX-SENSING TRANSCRIPTIONAL REPRESSOR REX 1"/>
    <property type="match status" value="1"/>
</dbReference>
<dbReference type="Pfam" id="PF02629">
    <property type="entry name" value="CoA_binding"/>
    <property type="match status" value="1"/>
</dbReference>
<dbReference type="Pfam" id="PF06971">
    <property type="entry name" value="Put_DNA-bind_N"/>
    <property type="match status" value="1"/>
</dbReference>
<dbReference type="SMART" id="SM00881">
    <property type="entry name" value="CoA_binding"/>
    <property type="match status" value="1"/>
</dbReference>
<dbReference type="SUPFAM" id="SSF51735">
    <property type="entry name" value="NAD(P)-binding Rossmann-fold domains"/>
    <property type="match status" value="1"/>
</dbReference>
<dbReference type="SUPFAM" id="SSF46785">
    <property type="entry name" value="Winged helix' DNA-binding domain"/>
    <property type="match status" value="1"/>
</dbReference>
<protein>
    <recommendedName>
        <fullName evidence="1">Redox-sensing transcriptional repressor Rex</fullName>
    </recommendedName>
</protein>
<reference key="1">
    <citation type="journal article" date="2004" name="Nucleic Acids Res.">
        <title>Whole genome comparisons of serotype 4b and 1/2a strains of the food-borne pathogen Listeria monocytogenes reveal new insights into the core genome components of this species.</title>
        <authorList>
            <person name="Nelson K.E."/>
            <person name="Fouts D.E."/>
            <person name="Mongodin E.F."/>
            <person name="Ravel J."/>
            <person name="DeBoy R.T."/>
            <person name="Kolonay J.F."/>
            <person name="Rasko D.A."/>
            <person name="Angiuoli S.V."/>
            <person name="Gill S.R."/>
            <person name="Paulsen I.T."/>
            <person name="Peterson J.D."/>
            <person name="White O."/>
            <person name="Nelson W.C."/>
            <person name="Nierman W.C."/>
            <person name="Beanan M.J."/>
            <person name="Brinkac L.M."/>
            <person name="Daugherty S.C."/>
            <person name="Dodson R.J."/>
            <person name="Durkin A.S."/>
            <person name="Madupu R."/>
            <person name="Haft D.H."/>
            <person name="Selengut J."/>
            <person name="Van Aken S.E."/>
            <person name="Khouri H.M."/>
            <person name="Fedorova N."/>
            <person name="Forberger H.A."/>
            <person name="Tran B."/>
            <person name="Kathariou S."/>
            <person name="Wonderling L.D."/>
            <person name="Uhlich G.A."/>
            <person name="Bayles D.O."/>
            <person name="Luchansky J.B."/>
            <person name="Fraser C.M."/>
        </authorList>
    </citation>
    <scope>NUCLEOTIDE SEQUENCE [LARGE SCALE GENOMIC DNA]</scope>
    <source>
        <strain>F2365</strain>
    </source>
</reference>
<gene>
    <name evidence="1" type="primary">rex</name>
    <name type="ordered locus">LMOf2365_2104</name>
</gene>
<feature type="chain" id="PRO_0000097898" description="Redox-sensing transcriptional repressor Rex">
    <location>
        <begin position="1"/>
        <end position="215"/>
    </location>
</feature>
<feature type="DNA-binding region" description="H-T-H motif" evidence="1">
    <location>
        <begin position="18"/>
        <end position="57"/>
    </location>
</feature>
<feature type="binding site" evidence="1">
    <location>
        <begin position="92"/>
        <end position="97"/>
    </location>
    <ligand>
        <name>NAD(+)</name>
        <dbReference type="ChEBI" id="CHEBI:57540"/>
    </ligand>
</feature>
<comment type="function">
    <text evidence="1">Modulates transcription in response to changes in cellular NADH/NAD(+) redox state.</text>
</comment>
<comment type="subunit">
    <text evidence="1">Homodimer.</text>
</comment>
<comment type="subcellular location">
    <subcellularLocation>
        <location evidence="1">Cytoplasm</location>
    </subcellularLocation>
</comment>
<comment type="similarity">
    <text evidence="1">Belongs to the transcriptional regulatory Rex family.</text>
</comment>
<evidence type="ECO:0000255" key="1">
    <source>
        <dbReference type="HAMAP-Rule" id="MF_01131"/>
    </source>
</evidence>
<organism>
    <name type="scientific">Listeria monocytogenes serotype 4b (strain F2365)</name>
    <dbReference type="NCBI Taxonomy" id="265669"/>
    <lineage>
        <taxon>Bacteria</taxon>
        <taxon>Bacillati</taxon>
        <taxon>Bacillota</taxon>
        <taxon>Bacilli</taxon>
        <taxon>Bacillales</taxon>
        <taxon>Listeriaceae</taxon>
        <taxon>Listeria</taxon>
    </lineage>
</organism>